<feature type="signal peptide" evidence="1">
    <location>
        <begin position="1"/>
        <end position="52"/>
    </location>
</feature>
<feature type="chain" id="PRO_0000014051" description="Uncharacterized protein MPN_643">
    <location>
        <begin position="53"/>
        <end position="302"/>
    </location>
</feature>
<proteinExistence type="inferred from homology"/>
<evidence type="ECO:0000255" key="1">
    <source>
        <dbReference type="PROSITE-ProRule" id="PRU00303"/>
    </source>
</evidence>
<evidence type="ECO:0000305" key="2"/>
<accession>P75154</accession>
<keyword id="KW-1185">Reference proteome</keyword>
<keyword id="KW-0732">Signal</keyword>
<reference key="1">
    <citation type="journal article" date="1996" name="Nucleic Acids Res.">
        <title>Complete sequence analysis of the genome of the bacterium Mycoplasma pneumoniae.</title>
        <authorList>
            <person name="Himmelreich R."/>
            <person name="Hilbert H."/>
            <person name="Plagens H."/>
            <person name="Pirkl E."/>
            <person name="Li B.-C."/>
            <person name="Herrmann R."/>
        </authorList>
    </citation>
    <scope>NUCLEOTIDE SEQUENCE [LARGE SCALE GENOMIC DNA]</scope>
    <source>
        <strain>ATCC 29342 / M129 / Subtype 1</strain>
    </source>
</reference>
<name>Y643_MYCPN</name>
<comment type="similarity">
    <text evidence="2">Belongs to the MG439/MG440 family.</text>
</comment>
<protein>
    <recommendedName>
        <fullName>Uncharacterized protein MPN_643</fullName>
    </recommendedName>
</protein>
<organism>
    <name type="scientific">Mycoplasma pneumoniae (strain ATCC 29342 / M129 / Subtype 1)</name>
    <name type="common">Mycoplasmoides pneumoniae</name>
    <dbReference type="NCBI Taxonomy" id="272634"/>
    <lineage>
        <taxon>Bacteria</taxon>
        <taxon>Bacillati</taxon>
        <taxon>Mycoplasmatota</taxon>
        <taxon>Mycoplasmoidales</taxon>
        <taxon>Mycoplasmoidaceae</taxon>
        <taxon>Mycoplasmoides</taxon>
    </lineage>
</organism>
<gene>
    <name type="ordered locus">MPN_643</name>
    <name type="ORF">E09_orf302</name>
    <name type="ORF">MP199</name>
</gene>
<sequence>MLKKLKVVRLLVNHLIYCPSIFMPYSKNMKKKIWNKTSLGALFMLFGTALTACSNSGFEANLTSLNQLRTSASKNTNLTQNKADLVTALKSAFENNPEGTTRVLLDAWKFTLLDAQILEKQDFSKFSKSFGSGRSIEDVEPSAGVRGLRLVERYTQDTANIINNVIKLDKQKVEAFSIQYKDPKNFRVQVKINAKGNYKKDTVKTYLSQVGLSDGDLNDTGTLEAEIIYTYMPPAASFFSASKFDKLTRAINFNTNLRIQIIGKDSVMTKLLQQSSFVKQLADQKFQDQSINLLPYVLYSIL</sequence>
<dbReference type="EMBL" id="U00089">
    <property type="protein sequence ID" value="AAB95847.1"/>
    <property type="molecule type" value="Genomic_DNA"/>
</dbReference>
<dbReference type="PIR" id="S73525">
    <property type="entry name" value="S73525"/>
</dbReference>
<dbReference type="RefSeq" id="NP_110332.1">
    <property type="nucleotide sequence ID" value="NC_000912.1"/>
</dbReference>
<dbReference type="SMR" id="P75154"/>
<dbReference type="IntAct" id="P75154">
    <property type="interactions" value="1"/>
</dbReference>
<dbReference type="STRING" id="272634.MPN_643"/>
<dbReference type="EnsemblBacteria" id="AAB95847">
    <property type="protein sequence ID" value="AAB95847"/>
    <property type="gene ID" value="MPN_643"/>
</dbReference>
<dbReference type="KEGG" id="mpn:MPN_643"/>
<dbReference type="PATRIC" id="fig|272634.6.peg.706"/>
<dbReference type="HOGENOM" id="CLU_080699_0_0_14"/>
<dbReference type="OrthoDB" id="403108at2"/>
<dbReference type="BioCyc" id="MPNE272634:G1GJ3-1027-MONOMER"/>
<dbReference type="Proteomes" id="UP000000808">
    <property type="component" value="Chromosome"/>
</dbReference>
<dbReference type="InterPro" id="IPR001595">
    <property type="entry name" value="Lipoprotein_3"/>
</dbReference>
<dbReference type="Pfam" id="PF00938">
    <property type="entry name" value="Lipoprotein_3"/>
    <property type="match status" value="1"/>
</dbReference>